<reference key="1">
    <citation type="journal article" date="2012" name="BMC Genomics">
        <title>Comparative genomics and transcriptomics of lineages I, II, and III strains of Listeria monocytogenes.</title>
        <authorList>
            <person name="Hain T."/>
            <person name="Ghai R."/>
            <person name="Billion A."/>
            <person name="Kuenne C.T."/>
            <person name="Steinweg C."/>
            <person name="Izar B."/>
            <person name="Mohamed W."/>
            <person name="Mraheil M."/>
            <person name="Domann E."/>
            <person name="Schaffrath S."/>
            <person name="Karst U."/>
            <person name="Goesmann A."/>
            <person name="Oehm S."/>
            <person name="Puhler A."/>
            <person name="Merkl R."/>
            <person name="Vorwerk S."/>
            <person name="Glaser P."/>
            <person name="Garrido P."/>
            <person name="Rusniok C."/>
            <person name="Buchrieser C."/>
            <person name="Goebel W."/>
            <person name="Chakraborty T."/>
        </authorList>
    </citation>
    <scope>NUCLEOTIDE SEQUENCE [LARGE SCALE GENOMIC DNA]</scope>
    <source>
        <strain>CLIP80459</strain>
    </source>
</reference>
<keyword id="KW-0143">Chaperone</keyword>
<keyword id="KW-0963">Cytoplasm</keyword>
<keyword id="KW-0346">Stress response</keyword>
<feature type="chain" id="PRO_1000213669" description="Protein GrpE">
    <location>
        <begin position="1"/>
        <end position="191"/>
    </location>
</feature>
<name>GRPE_LISMC</name>
<organism>
    <name type="scientific">Listeria monocytogenes serotype 4b (strain CLIP80459)</name>
    <dbReference type="NCBI Taxonomy" id="568819"/>
    <lineage>
        <taxon>Bacteria</taxon>
        <taxon>Bacillati</taxon>
        <taxon>Bacillota</taxon>
        <taxon>Bacilli</taxon>
        <taxon>Bacillales</taxon>
        <taxon>Listeriaceae</taxon>
        <taxon>Listeria</taxon>
    </lineage>
</organism>
<proteinExistence type="inferred from homology"/>
<gene>
    <name evidence="1" type="primary">grpE</name>
    <name type="ordered locus">Lm4b_01484</name>
</gene>
<protein>
    <recommendedName>
        <fullName evidence="1">Protein GrpE</fullName>
    </recommendedName>
    <alternativeName>
        <fullName evidence="1">HSP-70 cofactor</fullName>
    </alternativeName>
</protein>
<dbReference type="EMBL" id="FM242711">
    <property type="protein sequence ID" value="CAS05246.1"/>
    <property type="molecule type" value="Genomic_DNA"/>
</dbReference>
<dbReference type="RefSeq" id="WP_003726025.1">
    <property type="nucleotide sequence ID" value="NC_012488.1"/>
</dbReference>
<dbReference type="SMR" id="C1KVC1"/>
<dbReference type="KEGG" id="lmc:Lm4b_01484"/>
<dbReference type="HOGENOM" id="CLU_057217_5_2_9"/>
<dbReference type="GO" id="GO:0005737">
    <property type="term" value="C:cytoplasm"/>
    <property type="evidence" value="ECO:0007669"/>
    <property type="project" value="UniProtKB-SubCell"/>
</dbReference>
<dbReference type="GO" id="GO:0000774">
    <property type="term" value="F:adenyl-nucleotide exchange factor activity"/>
    <property type="evidence" value="ECO:0007669"/>
    <property type="project" value="InterPro"/>
</dbReference>
<dbReference type="GO" id="GO:0042803">
    <property type="term" value="F:protein homodimerization activity"/>
    <property type="evidence" value="ECO:0007669"/>
    <property type="project" value="InterPro"/>
</dbReference>
<dbReference type="GO" id="GO:0051087">
    <property type="term" value="F:protein-folding chaperone binding"/>
    <property type="evidence" value="ECO:0007669"/>
    <property type="project" value="InterPro"/>
</dbReference>
<dbReference type="GO" id="GO:0051082">
    <property type="term" value="F:unfolded protein binding"/>
    <property type="evidence" value="ECO:0007669"/>
    <property type="project" value="TreeGrafter"/>
</dbReference>
<dbReference type="GO" id="GO:0006457">
    <property type="term" value="P:protein folding"/>
    <property type="evidence" value="ECO:0007669"/>
    <property type="project" value="InterPro"/>
</dbReference>
<dbReference type="CDD" id="cd00446">
    <property type="entry name" value="GrpE"/>
    <property type="match status" value="1"/>
</dbReference>
<dbReference type="FunFam" id="2.30.22.10:FF:000001">
    <property type="entry name" value="Protein GrpE"/>
    <property type="match status" value="1"/>
</dbReference>
<dbReference type="FunFam" id="3.90.20.20:FF:000002">
    <property type="entry name" value="Protein GrpE"/>
    <property type="match status" value="1"/>
</dbReference>
<dbReference type="Gene3D" id="3.90.20.20">
    <property type="match status" value="1"/>
</dbReference>
<dbReference type="Gene3D" id="2.30.22.10">
    <property type="entry name" value="Head domain of nucleotide exchange factor GrpE"/>
    <property type="match status" value="1"/>
</dbReference>
<dbReference type="HAMAP" id="MF_01151">
    <property type="entry name" value="GrpE"/>
    <property type="match status" value="1"/>
</dbReference>
<dbReference type="InterPro" id="IPR000740">
    <property type="entry name" value="GrpE"/>
</dbReference>
<dbReference type="InterPro" id="IPR013805">
    <property type="entry name" value="GrpE_coiled_coil"/>
</dbReference>
<dbReference type="InterPro" id="IPR009012">
    <property type="entry name" value="GrpE_head"/>
</dbReference>
<dbReference type="NCBIfam" id="NF010738">
    <property type="entry name" value="PRK14140.1"/>
    <property type="match status" value="1"/>
</dbReference>
<dbReference type="PANTHER" id="PTHR21237">
    <property type="entry name" value="GRPE PROTEIN"/>
    <property type="match status" value="1"/>
</dbReference>
<dbReference type="PANTHER" id="PTHR21237:SF23">
    <property type="entry name" value="GRPE PROTEIN HOMOLOG, MITOCHONDRIAL"/>
    <property type="match status" value="1"/>
</dbReference>
<dbReference type="Pfam" id="PF01025">
    <property type="entry name" value="GrpE"/>
    <property type="match status" value="1"/>
</dbReference>
<dbReference type="PRINTS" id="PR00773">
    <property type="entry name" value="GRPEPROTEIN"/>
</dbReference>
<dbReference type="SUPFAM" id="SSF58014">
    <property type="entry name" value="Coiled-coil domain of nucleotide exchange factor GrpE"/>
    <property type="match status" value="1"/>
</dbReference>
<dbReference type="SUPFAM" id="SSF51064">
    <property type="entry name" value="Head domain of nucleotide exchange factor GrpE"/>
    <property type="match status" value="1"/>
</dbReference>
<dbReference type="PROSITE" id="PS01071">
    <property type="entry name" value="GRPE"/>
    <property type="match status" value="1"/>
</dbReference>
<accession>C1KVC1</accession>
<evidence type="ECO:0000255" key="1">
    <source>
        <dbReference type="HAMAP-Rule" id="MF_01151"/>
    </source>
</evidence>
<sequence>MSEKKNKKERLADEIEQEELNILDETEETVEEEAAADTLTEEQAKILELENKLDEVENRYLRMQADFENVKKRHIADRDASQKYRSQSLAQDLLPALDSFEKALATTSDQEEVKQILKGMEMVYNQILVAFEKEGIEVIPAVGEQFDPNFHQAVMQDSDENAGSNEITAELQKGYKLKDRVIRPSMVKVNQ</sequence>
<comment type="function">
    <text evidence="1">Participates actively in the response to hyperosmotic and heat shock by preventing the aggregation of stress-denatured proteins, in association with DnaK and GrpE. It is the nucleotide exchange factor for DnaK and may function as a thermosensor. Unfolded proteins bind initially to DnaJ; upon interaction with the DnaJ-bound protein, DnaK hydrolyzes its bound ATP, resulting in the formation of a stable complex. GrpE releases ADP from DnaK; ATP binding to DnaK triggers the release of the substrate protein, thus completing the reaction cycle. Several rounds of ATP-dependent interactions between DnaJ, DnaK and GrpE are required for fully efficient folding.</text>
</comment>
<comment type="subunit">
    <text evidence="1">Homodimer.</text>
</comment>
<comment type="subcellular location">
    <subcellularLocation>
        <location evidence="1">Cytoplasm</location>
    </subcellularLocation>
</comment>
<comment type="similarity">
    <text evidence="1">Belongs to the GrpE family.</text>
</comment>